<protein>
    <recommendedName>
        <fullName>N-lysine methyltransferase setd6</fullName>
        <ecNumber>2.1.1.-</ecNumber>
    </recommendedName>
    <alternativeName>
        <fullName>SET domain-containing protein 6</fullName>
    </alternativeName>
</protein>
<feature type="chain" id="PRO_0000405842" description="N-lysine methyltransferase setd6">
    <location>
        <begin position="1"/>
        <end position="449"/>
    </location>
</feature>
<feature type="domain" description="SET" evidence="2">
    <location>
        <begin position="32"/>
        <end position="257"/>
    </location>
</feature>
<gene>
    <name type="primary">setd6</name>
</gene>
<reference key="1">
    <citation type="journal article" date="2010" name="BMC Genomics">
        <title>Salmo salar and Esox lucius full-length cDNA sequences reveal changes in evolutionary pressures on a post-tetraploidization genome.</title>
        <authorList>
            <person name="Leong J.S."/>
            <person name="Jantzen S.G."/>
            <person name="von Schalburg K.R."/>
            <person name="Cooper G.A."/>
            <person name="Messmer A.M."/>
            <person name="Liao N.Y."/>
            <person name="Munro S."/>
            <person name="Moore R."/>
            <person name="Holt R.A."/>
            <person name="Jones S.J."/>
            <person name="Davidson W.S."/>
            <person name="Koop B.F."/>
        </authorList>
    </citation>
    <scope>NUCLEOTIDE SEQUENCE [LARGE SCALE MRNA]</scope>
</reference>
<name>SETD6_SALSA</name>
<evidence type="ECO:0000250" key="1">
    <source>
        <dbReference type="UniProtKB" id="Q8TBK2"/>
    </source>
</evidence>
<evidence type="ECO:0000255" key="2">
    <source>
        <dbReference type="PROSITE-ProRule" id="PRU00190"/>
    </source>
</evidence>
<proteinExistence type="evidence at transcript level"/>
<comment type="function">
    <text evidence="1">Protein-lysine N-methyltransferase.</text>
</comment>
<comment type="subcellular location">
    <subcellularLocation>
        <location evidence="1">Nucleus</location>
    </subcellularLocation>
</comment>
<comment type="similarity">
    <text evidence="2">Belongs to the class V-like SAM-binding methyltransferase superfamily. Histone-lysine methyltransferase family. SETD6 subfamily.</text>
</comment>
<dbReference type="EC" id="2.1.1.-"/>
<dbReference type="EMBL" id="BT058638">
    <property type="protein sequence ID" value="ACN10351.1"/>
    <property type="molecule type" value="mRNA"/>
</dbReference>
<dbReference type="EMBL" id="BT060351">
    <property type="protein sequence ID" value="ACN12711.1"/>
    <property type="molecule type" value="mRNA"/>
</dbReference>
<dbReference type="RefSeq" id="NP_001158764.1">
    <property type="nucleotide sequence ID" value="NM_001165292.2"/>
</dbReference>
<dbReference type="STRING" id="8030.ENSSSAP00000056557"/>
<dbReference type="PaxDb" id="8030-ENSSSAP00000056557"/>
<dbReference type="GeneID" id="100306753"/>
<dbReference type="KEGG" id="sasa:100306753"/>
<dbReference type="CTD" id="79918"/>
<dbReference type="Proteomes" id="UP000087266">
    <property type="component" value="Chromosome ssa10"/>
</dbReference>
<dbReference type="GO" id="GO:0005634">
    <property type="term" value="C:nucleus"/>
    <property type="evidence" value="ECO:0000250"/>
    <property type="project" value="UniProtKB"/>
</dbReference>
<dbReference type="GO" id="GO:0016279">
    <property type="term" value="F:protein-lysine N-methyltransferase activity"/>
    <property type="evidence" value="ECO:0000250"/>
    <property type="project" value="UniProtKB"/>
</dbReference>
<dbReference type="GO" id="GO:0032088">
    <property type="term" value="P:negative regulation of NF-kappaB transcription factor activity"/>
    <property type="evidence" value="ECO:0000250"/>
    <property type="project" value="UniProtKB"/>
</dbReference>
<dbReference type="GO" id="GO:0018026">
    <property type="term" value="P:peptidyl-lysine monomethylation"/>
    <property type="evidence" value="ECO:0000250"/>
    <property type="project" value="UniProtKB"/>
</dbReference>
<dbReference type="GO" id="GO:0050727">
    <property type="term" value="P:regulation of inflammatory response"/>
    <property type="evidence" value="ECO:0000250"/>
    <property type="project" value="UniProtKB"/>
</dbReference>
<dbReference type="CDD" id="cd19178">
    <property type="entry name" value="SET_SETD6"/>
    <property type="match status" value="1"/>
</dbReference>
<dbReference type="FunFam" id="3.90.1410.10:FF:000013">
    <property type="entry name" value="N-lysine methyltransferase SETD6"/>
    <property type="match status" value="1"/>
</dbReference>
<dbReference type="FunFam" id="3.90.1420.10:FF:000002">
    <property type="entry name" value="N-lysine methyltransferase SETD6"/>
    <property type="match status" value="1"/>
</dbReference>
<dbReference type="Gene3D" id="3.90.1420.10">
    <property type="entry name" value="Rubisco LSMT, substrate-binding domain"/>
    <property type="match status" value="1"/>
</dbReference>
<dbReference type="Gene3D" id="3.90.1410.10">
    <property type="entry name" value="set domain protein methyltransferase, domain 1"/>
    <property type="match status" value="1"/>
</dbReference>
<dbReference type="InterPro" id="IPR011383">
    <property type="entry name" value="N-lys_methylase_SETD6"/>
</dbReference>
<dbReference type="InterPro" id="IPR015353">
    <property type="entry name" value="Rubisco_LSMT_subst-bd"/>
</dbReference>
<dbReference type="InterPro" id="IPR036464">
    <property type="entry name" value="Rubisco_LSMT_subst-bd_sf"/>
</dbReference>
<dbReference type="InterPro" id="IPR001214">
    <property type="entry name" value="SET_dom"/>
</dbReference>
<dbReference type="InterPro" id="IPR046341">
    <property type="entry name" value="SET_dom_sf"/>
</dbReference>
<dbReference type="InterPro" id="IPR050600">
    <property type="entry name" value="SETD3_SETD6_MTase"/>
</dbReference>
<dbReference type="InterPro" id="IPR044430">
    <property type="entry name" value="SETD6_SET"/>
</dbReference>
<dbReference type="PANTHER" id="PTHR13271:SF34">
    <property type="entry name" value="N-LYSINE METHYLTRANSFERASE SETD6"/>
    <property type="match status" value="1"/>
</dbReference>
<dbReference type="PANTHER" id="PTHR13271">
    <property type="entry name" value="UNCHARACTERIZED PUTATIVE METHYLTRANSFERASE"/>
    <property type="match status" value="1"/>
</dbReference>
<dbReference type="Pfam" id="PF09273">
    <property type="entry name" value="Rubis-subs-bind"/>
    <property type="match status" value="1"/>
</dbReference>
<dbReference type="Pfam" id="PF00856">
    <property type="entry name" value="SET"/>
    <property type="match status" value="1"/>
</dbReference>
<dbReference type="PIRSF" id="PIRSF011771">
    <property type="entry name" value="RMS1_SET"/>
    <property type="match status" value="1"/>
</dbReference>
<dbReference type="SUPFAM" id="SSF81822">
    <property type="entry name" value="RuBisCo LSMT C-terminal, substrate-binding domain"/>
    <property type="match status" value="1"/>
</dbReference>
<dbReference type="SUPFAM" id="SSF82199">
    <property type="entry name" value="SET domain"/>
    <property type="match status" value="1"/>
</dbReference>
<dbReference type="PROSITE" id="PS50280">
    <property type="entry name" value="SET"/>
    <property type="match status" value="1"/>
</dbReference>
<organism>
    <name type="scientific">Salmo salar</name>
    <name type="common">Atlantic salmon</name>
    <dbReference type="NCBI Taxonomy" id="8030"/>
    <lineage>
        <taxon>Eukaryota</taxon>
        <taxon>Metazoa</taxon>
        <taxon>Chordata</taxon>
        <taxon>Craniata</taxon>
        <taxon>Vertebrata</taxon>
        <taxon>Euteleostomi</taxon>
        <taxon>Actinopterygii</taxon>
        <taxon>Neopterygii</taxon>
        <taxon>Teleostei</taxon>
        <taxon>Protacanthopterygii</taxon>
        <taxon>Salmoniformes</taxon>
        <taxon>Salmonidae</taxon>
        <taxon>Salmoninae</taxon>
        <taxon>Salmo</taxon>
    </lineage>
</organism>
<keyword id="KW-0489">Methyltransferase</keyword>
<keyword id="KW-0539">Nucleus</keyword>
<keyword id="KW-1185">Reference proteome</keyword>
<keyword id="KW-0949">S-adenosyl-L-methionine</keyword>
<keyword id="KW-0808">Transferase</keyword>
<accession>C0H8I2</accession>
<sequence>MATDAKRLKTEGSDPLQSFLQWCEGVGLKLNNKVYISKEGTVAEYGMLAKEDIDEGELLFTIPRMALLHQGTTKVLAVLEEGKASLENTSGWVPLLLALMYEYTSPQSHWRPYLSLWSDFTALDHPMFWSKDERDRLLKGTGIPEAVDTDLTNIQKEYKDIVLPFITLHPDLWDPERHTLDLYRSLVAFVMAYSFQEPLDEEDEDEKDPNPPMMVPIADMLNHVSNHNANLEYTPECLKMVSVRSIRKGEEVFNTYGQMANWQLLHMYGLXEPYQSNSNDTADIPMSNVYKAAVQVTRSEAEQRLLVEKWSLLCEMEMVGDKGVFIFGKSGSLTDTEMYTTLKILCMSVEEFEDFRENEGWEEADDDEEKMLQALSNEGLPSLPPVWRCLVHAAARFTLDSYGEDMLKDKVLLEDKDGYAKLSSRQRRALQVRYGQKTILHQLLELTKP</sequence>